<accession>B5YT65</accession>
<keyword id="KW-0436">Ligase</keyword>
<keyword id="KW-0597">Phosphoprotein</keyword>
<keyword id="KW-0662">Pyridine nucleotide biosynthesis</keyword>
<feature type="chain" id="PRO_1000129466" description="Nicotinate phosphoribosyltransferase">
    <location>
        <begin position="1"/>
        <end position="400"/>
    </location>
</feature>
<feature type="modified residue" description="Phosphohistidine; by autocatalysis" evidence="1">
    <location>
        <position position="220"/>
    </location>
</feature>
<evidence type="ECO:0000255" key="1">
    <source>
        <dbReference type="HAMAP-Rule" id="MF_00570"/>
    </source>
</evidence>
<proteinExistence type="inferred from homology"/>
<gene>
    <name evidence="1" type="primary">pncB</name>
    <name type="ordered locus">ECH74115_1092</name>
</gene>
<sequence length="400" mass="45969">MTQFASPVLHSLLDTDAYKLHMQQAVFHHYYDVHVAAEFRCRGDDLLGIYADAIREQVQAMQHLRLQDDEYQWLSALPFFKADYLNWLREFRFNPEQVTVSNDNGKLDIRLSGPWREVILWEVPLLAVISEMVHRYRSPQADVAQALDTLESKLVDFSALTAGLDMSRFHLMDFGTRRRFSREVQETIVKRLQQESWFVGTSNYDLARRLSLTPMGTQAHEWFQAHQQISPDLANSQRAALAAWLEEYPDQLGIALTDCITMDAFLRDFGVEFASRYQGLRHDSGDPVEWGEKAIAHYEKLEIDPQSKTLVFSDNLDLRKAVELYRHFSSRVQLSFGIGTRLTCDIPQVKPLNIVIKLVECNGKPVAKLSDSPGKTICHDKAFVRALRKAFDLPHIKKAS</sequence>
<name>PNCB_ECO5E</name>
<reference key="1">
    <citation type="journal article" date="2011" name="Proc. Natl. Acad. Sci. U.S.A.">
        <title>Genomic anatomy of Escherichia coli O157:H7 outbreaks.</title>
        <authorList>
            <person name="Eppinger M."/>
            <person name="Mammel M.K."/>
            <person name="Leclerc J.E."/>
            <person name="Ravel J."/>
            <person name="Cebula T.A."/>
        </authorList>
    </citation>
    <scope>NUCLEOTIDE SEQUENCE [LARGE SCALE GENOMIC DNA]</scope>
    <source>
        <strain>EC4115 / EHEC</strain>
    </source>
</reference>
<dbReference type="EC" id="6.3.4.21" evidence="1"/>
<dbReference type="EMBL" id="CP001164">
    <property type="protein sequence ID" value="ACI39222.1"/>
    <property type="molecule type" value="Genomic_DNA"/>
</dbReference>
<dbReference type="RefSeq" id="WP_001301736.1">
    <property type="nucleotide sequence ID" value="NC_011353.1"/>
</dbReference>
<dbReference type="SMR" id="B5YT65"/>
<dbReference type="KEGG" id="ecf:ECH74115_1092"/>
<dbReference type="HOGENOM" id="CLU_030991_1_0_6"/>
<dbReference type="UniPathway" id="UPA00253">
    <property type="reaction ID" value="UER00457"/>
</dbReference>
<dbReference type="GO" id="GO:0005829">
    <property type="term" value="C:cytosol"/>
    <property type="evidence" value="ECO:0007669"/>
    <property type="project" value="TreeGrafter"/>
</dbReference>
<dbReference type="GO" id="GO:0004516">
    <property type="term" value="F:nicotinate phosphoribosyltransferase activity"/>
    <property type="evidence" value="ECO:0007669"/>
    <property type="project" value="UniProtKB-UniRule"/>
</dbReference>
<dbReference type="GO" id="GO:0034355">
    <property type="term" value="P:NAD biosynthetic process via the salvage pathway"/>
    <property type="evidence" value="ECO:0007669"/>
    <property type="project" value="TreeGrafter"/>
</dbReference>
<dbReference type="CDD" id="cd01401">
    <property type="entry name" value="PncB_like"/>
    <property type="match status" value="1"/>
</dbReference>
<dbReference type="FunFam" id="3.20.140.10:FF:000001">
    <property type="entry name" value="Nicotinate phosphoribosyltransferase"/>
    <property type="match status" value="1"/>
</dbReference>
<dbReference type="Gene3D" id="3.20.140.10">
    <property type="entry name" value="nicotinate phosphoribosyltransferase"/>
    <property type="match status" value="1"/>
</dbReference>
<dbReference type="HAMAP" id="MF_00570">
    <property type="entry name" value="NAPRTase"/>
    <property type="match status" value="1"/>
</dbReference>
<dbReference type="InterPro" id="IPR041525">
    <property type="entry name" value="N/Namide_PRibTrfase"/>
</dbReference>
<dbReference type="InterPro" id="IPR040727">
    <property type="entry name" value="NAPRTase_N"/>
</dbReference>
<dbReference type="InterPro" id="IPR006406">
    <property type="entry name" value="Nic_PRibTrfase"/>
</dbReference>
<dbReference type="InterPro" id="IPR007229">
    <property type="entry name" value="Nic_PRibTrfase-Fam"/>
</dbReference>
<dbReference type="InterPro" id="IPR036068">
    <property type="entry name" value="Nicotinate_pribotase-like_C"/>
</dbReference>
<dbReference type="NCBIfam" id="TIGR01514">
    <property type="entry name" value="NAPRTase"/>
    <property type="match status" value="1"/>
</dbReference>
<dbReference type="NCBIfam" id="NF003704">
    <property type="entry name" value="PRK05321.1"/>
    <property type="match status" value="1"/>
</dbReference>
<dbReference type="PANTHER" id="PTHR11098">
    <property type="entry name" value="NICOTINATE PHOSPHORIBOSYLTRANSFERASE"/>
    <property type="match status" value="1"/>
</dbReference>
<dbReference type="PANTHER" id="PTHR11098:SF1">
    <property type="entry name" value="NICOTINATE PHOSPHORIBOSYLTRANSFERASE"/>
    <property type="match status" value="1"/>
</dbReference>
<dbReference type="Pfam" id="PF04095">
    <property type="entry name" value="NAPRTase"/>
    <property type="match status" value="1"/>
</dbReference>
<dbReference type="Pfam" id="PF17767">
    <property type="entry name" value="NAPRTase_N"/>
    <property type="match status" value="1"/>
</dbReference>
<dbReference type="PIRSF" id="PIRSF000484">
    <property type="entry name" value="NAPRT"/>
    <property type="match status" value="1"/>
</dbReference>
<dbReference type="SUPFAM" id="SSF51690">
    <property type="entry name" value="Nicotinate/Quinolinate PRTase C-terminal domain-like"/>
    <property type="match status" value="1"/>
</dbReference>
<dbReference type="SUPFAM" id="SSF54675">
    <property type="entry name" value="Nicotinate/Quinolinate PRTase N-terminal domain-like"/>
    <property type="match status" value="1"/>
</dbReference>
<organism>
    <name type="scientific">Escherichia coli O157:H7 (strain EC4115 / EHEC)</name>
    <dbReference type="NCBI Taxonomy" id="444450"/>
    <lineage>
        <taxon>Bacteria</taxon>
        <taxon>Pseudomonadati</taxon>
        <taxon>Pseudomonadota</taxon>
        <taxon>Gammaproteobacteria</taxon>
        <taxon>Enterobacterales</taxon>
        <taxon>Enterobacteriaceae</taxon>
        <taxon>Escherichia</taxon>
    </lineage>
</organism>
<protein>
    <recommendedName>
        <fullName evidence="1">Nicotinate phosphoribosyltransferase</fullName>
        <shortName evidence="1">NAPRTase</shortName>
        <ecNumber evidence="1">6.3.4.21</ecNumber>
    </recommendedName>
</protein>
<comment type="function">
    <text evidence="1">Catalyzes the synthesis of beta-nicotinate D-ribonucleotide from nicotinate and 5-phospho-D-ribose 1-phosphate at the expense of ATP.</text>
</comment>
<comment type="catalytic activity">
    <reaction evidence="1">
        <text>nicotinate + 5-phospho-alpha-D-ribose 1-diphosphate + ATP + H2O = nicotinate beta-D-ribonucleotide + ADP + phosphate + diphosphate</text>
        <dbReference type="Rhea" id="RHEA:36163"/>
        <dbReference type="ChEBI" id="CHEBI:15377"/>
        <dbReference type="ChEBI" id="CHEBI:30616"/>
        <dbReference type="ChEBI" id="CHEBI:32544"/>
        <dbReference type="ChEBI" id="CHEBI:33019"/>
        <dbReference type="ChEBI" id="CHEBI:43474"/>
        <dbReference type="ChEBI" id="CHEBI:57502"/>
        <dbReference type="ChEBI" id="CHEBI:58017"/>
        <dbReference type="ChEBI" id="CHEBI:456216"/>
        <dbReference type="EC" id="6.3.4.21"/>
    </reaction>
</comment>
<comment type="pathway">
    <text evidence="1">Cofactor biosynthesis; NAD(+) biosynthesis; nicotinate D-ribonucleotide from nicotinate: step 1/1.</text>
</comment>
<comment type="PTM">
    <text evidence="1">Transiently phosphorylated on a His residue during the reaction cycle. Phosphorylation strongly increases the affinity for substrates and increases the rate of nicotinate D-ribonucleotide production. Dephosphorylation regenerates the low-affinity form of the enzyme, leading to product release.</text>
</comment>
<comment type="similarity">
    <text evidence="1">Belongs to the NAPRTase family.</text>
</comment>